<feature type="chain" id="PRO_0000461889" description="DNA replication regulator protein HobA">
    <location>
        <begin position="1"/>
        <end position="180"/>
    </location>
</feature>
<feature type="binding site" evidence="7">
    <location>
        <position position="17"/>
    </location>
    <ligand>
        <name>Ca(2+)</name>
        <dbReference type="ChEBI" id="CHEBI:29108"/>
        <label>1</label>
    </ligand>
</feature>
<feature type="binding site" evidence="7">
    <location>
        <position position="27"/>
    </location>
    <ligand>
        <name>Ca(2+)</name>
        <dbReference type="ChEBI" id="CHEBI:29108"/>
        <label>1</label>
    </ligand>
</feature>
<feature type="binding site" evidence="7">
    <location>
        <position position="140"/>
    </location>
    <ligand>
        <name>Ca(2+)</name>
        <dbReference type="ChEBI" id="CHEBI:29108"/>
        <label>2</label>
    </ligand>
</feature>
<feature type="binding site" evidence="7">
    <location>
        <position position="140"/>
    </location>
    <ligand>
        <name>Ca(2+)</name>
        <dbReference type="ChEBI" id="CHEBI:29108"/>
        <label>3</label>
    </ligand>
</feature>
<feature type="binding site" evidence="7">
    <location>
        <position position="143"/>
    </location>
    <ligand>
        <name>Ca(2+)</name>
        <dbReference type="ChEBI" id="CHEBI:29108"/>
        <label>2</label>
    </ligand>
</feature>
<feature type="binding site" evidence="7">
    <location>
        <position position="143"/>
    </location>
    <ligand>
        <name>Ca(2+)</name>
        <dbReference type="ChEBI" id="CHEBI:29108"/>
        <label>3</label>
    </ligand>
</feature>
<feature type="binding site" evidence="7">
    <location>
        <position position="176"/>
    </location>
    <ligand>
        <name>Ca(2+)</name>
        <dbReference type="ChEBI" id="CHEBI:29108"/>
        <label>4</label>
    </ligand>
</feature>
<feature type="mutagenesis site" description="Does not interact with DnaA in vitro, mutant cannot be made in vivo." evidence="3">
    <original>ERP</original>
    <variation>AAA</variation>
    <location>
        <begin position="76"/>
        <end position="78"/>
    </location>
</feature>
<feature type="mutagenesis site" description="Does not interact with DnaA in vitro, mutant cannot be made in vivo." evidence="3">
    <original>L</original>
    <variation>R</variation>
    <location>
        <position position="80"/>
    </location>
</feature>
<feature type="mutagenesis site" description="Does not interact with DnaA in vitro, mutant cannot be made in vivo." evidence="3">
    <original>Y</original>
    <variation>E</variation>
    <location>
        <position position="175"/>
    </location>
</feature>
<feature type="helix" evidence="9">
    <location>
        <begin position="4"/>
        <end position="22"/>
    </location>
</feature>
<feature type="helix" evidence="9">
    <location>
        <begin position="25"/>
        <end position="28"/>
    </location>
</feature>
<feature type="helix" evidence="9">
    <location>
        <begin position="33"/>
        <end position="45"/>
    </location>
</feature>
<feature type="strand" evidence="9">
    <location>
        <begin position="49"/>
        <end position="54"/>
    </location>
</feature>
<feature type="helix" evidence="9">
    <location>
        <begin position="56"/>
        <end position="58"/>
    </location>
</feature>
<feature type="helix" evidence="9">
    <location>
        <begin position="59"/>
        <end position="69"/>
    </location>
</feature>
<feature type="strand" evidence="9">
    <location>
        <begin position="82"/>
        <end position="85"/>
    </location>
</feature>
<feature type="strand" evidence="10">
    <location>
        <begin position="86"/>
        <end position="88"/>
    </location>
</feature>
<feature type="helix" evidence="9">
    <location>
        <begin position="96"/>
        <end position="106"/>
    </location>
</feature>
<feature type="strand" evidence="9">
    <location>
        <begin position="107"/>
        <end position="116"/>
    </location>
</feature>
<feature type="helix" evidence="9">
    <location>
        <begin position="121"/>
        <end position="127"/>
    </location>
</feature>
<feature type="strand" evidence="9">
    <location>
        <begin position="129"/>
        <end position="131"/>
    </location>
</feature>
<feature type="strand" evidence="9">
    <location>
        <begin position="133"/>
        <end position="139"/>
    </location>
</feature>
<feature type="strand" evidence="9">
    <location>
        <begin position="141"/>
        <end position="147"/>
    </location>
</feature>
<feature type="helix" evidence="9">
    <location>
        <begin position="155"/>
        <end position="174"/>
    </location>
</feature>
<feature type="strand" evidence="9">
    <location>
        <begin position="177"/>
        <end position="179"/>
    </location>
</feature>
<name>HOBA_HELPY</name>
<sequence length="180" mass="21003">MKNFYDWIKEFVRDQGEFIAQQSGWLELERSSYAKLIAQTISHVLNGGSLLVSADSSRHWFLNYILSNLNPKDLKERPLLSVIDFNASSFYPKNDANLSLATIEMTYQNPMFWHVGKIENEGLKTILLSKIPSFLWLFEELKEDCLLLKEHDSLLDYKLLQLFKLFENALFSVLYNKVTL</sequence>
<evidence type="ECO:0000269" key="1">
    <source>
    </source>
</evidence>
<evidence type="ECO:0000269" key="2">
    <source>
    </source>
</evidence>
<evidence type="ECO:0000269" key="3">
    <source>
    </source>
</evidence>
<evidence type="ECO:0000303" key="4">
    <source>
    </source>
</evidence>
<evidence type="ECO:0000305" key="5"/>
<evidence type="ECO:0000312" key="6">
    <source>
        <dbReference type="EMBL" id="AAD08280.1"/>
    </source>
</evidence>
<evidence type="ECO:0007744" key="7">
    <source>
        <dbReference type="PDB" id="2UVP"/>
    </source>
</evidence>
<evidence type="ECO:0007744" key="8">
    <source>
        <dbReference type="PDB" id="2WP0"/>
    </source>
</evidence>
<evidence type="ECO:0007829" key="9">
    <source>
        <dbReference type="PDB" id="2UVP"/>
    </source>
</evidence>
<evidence type="ECO:0007829" key="10">
    <source>
        <dbReference type="PDB" id="2WP0"/>
    </source>
</evidence>
<comment type="function">
    <text evidence="1">Required for DNA replication initiation (PubMed:17645450). Increases binding of DnaA to oriC region (PubMed:17645450).</text>
</comment>
<comment type="cofactor">
    <cofactor evidence="7">
        <name>Ca(2+)</name>
        <dbReference type="ChEBI" id="CHEBI:29108"/>
    </cofactor>
    <text evidence="2">Binds 4 Ca(2+) ions, it is not known if they are physiologically relevant.</text>
</comment>
<comment type="subunit">
    <text evidence="1 2 3">Forms dimers and homotetramers (PubMed:17645450, PubMed:17683397). Interacts with domains I and II (residues 1-112) of DnaA (PubMed:17645450, PubMed:17683397). In a crystal with domains I and II of DnaA HobA forms tetramers with DnaA fragments bound at the dimer interface of the tetramer (PubMed:19940251).</text>
</comment>
<comment type="interaction">
    <interactant intactId="EBI-527984">
        <id>O25828</id>
    </interactant>
    <interactant intactId="EBI-527994">
        <id>O26057</id>
        <label>dnaA</label>
    </interactant>
    <organismsDiffer>false</organismsDiffer>
    <experiments>14</experiments>
</comment>
<comment type="interaction">
    <interactant intactId="EBI-527984">
        <id>O25828</id>
    </interactant>
    <interactant intactId="EBI-527984">
        <id>O25828</id>
        <label>HP_1230</label>
    </interactant>
    <organismsDiffer>false</organismsDiffer>
    <experiments>5</experiments>
</comment>
<comment type="induction">
    <text evidence="1">Expressed in logarithmic, stationary and cooccoid stages (at protein level).</text>
</comment>
<comment type="disruption phenotype">
    <text evidence="1">Essential, it cannot be deleted (shown in clinical strain N6). Depletion studies suggest it is required for the initiation of H.pylori chromosome replication (strain N6).</text>
</comment>
<comment type="miscellaneous">
    <text evidence="2 3">Estimated to be present at about 3000 molecules per cell (PubMed:17645450) A structural homolog of E.coli DiaA (PubMed:17683397, PubMed:19940251).</text>
</comment>
<dbReference type="EMBL" id="AE000511">
    <property type="protein sequence ID" value="AAD08280.1"/>
    <property type="molecule type" value="Genomic_DNA"/>
</dbReference>
<dbReference type="PIR" id="F64673">
    <property type="entry name" value="F64673"/>
</dbReference>
<dbReference type="RefSeq" id="NP_208022.1">
    <property type="nucleotide sequence ID" value="NC_000915.1"/>
</dbReference>
<dbReference type="RefSeq" id="WP_000788231.1">
    <property type="nucleotide sequence ID" value="NC_018939.1"/>
</dbReference>
<dbReference type="PDB" id="2UVP">
    <property type="method" value="X-ray"/>
    <property type="resolution" value="1.70 A"/>
    <property type="chains" value="A/B/C/D=1-180"/>
</dbReference>
<dbReference type="PDB" id="2WP0">
    <property type="method" value="X-ray"/>
    <property type="resolution" value="2.67 A"/>
    <property type="chains" value="A/B=1-180"/>
</dbReference>
<dbReference type="PDBsum" id="2UVP"/>
<dbReference type="PDBsum" id="2WP0"/>
<dbReference type="SMR" id="O25828"/>
<dbReference type="DIP" id="DIP-3677N"/>
<dbReference type="IntAct" id="O25828">
    <property type="interactions" value="2"/>
</dbReference>
<dbReference type="MINT" id="O25828"/>
<dbReference type="STRING" id="85962.HP_1230"/>
<dbReference type="PaxDb" id="85962-C694_06350"/>
<dbReference type="EnsemblBacteria" id="AAD08280">
    <property type="protein sequence ID" value="AAD08280"/>
    <property type="gene ID" value="HP_1230"/>
</dbReference>
<dbReference type="KEGG" id="heo:C694_06350"/>
<dbReference type="KEGG" id="hpy:HP_1230"/>
<dbReference type="PATRIC" id="fig|85962.47.peg.1318"/>
<dbReference type="InParanoid" id="O25828"/>
<dbReference type="OrthoDB" id="5329076at2"/>
<dbReference type="EvolutionaryTrace" id="O25828"/>
<dbReference type="Proteomes" id="UP000000429">
    <property type="component" value="Chromosome"/>
</dbReference>
<dbReference type="GO" id="GO:0042802">
    <property type="term" value="F:identical protein binding"/>
    <property type="evidence" value="ECO:0000353"/>
    <property type="project" value="IntAct"/>
</dbReference>
<dbReference type="GO" id="GO:0046872">
    <property type="term" value="F:metal ion binding"/>
    <property type="evidence" value="ECO:0007669"/>
    <property type="project" value="UniProtKB-KW"/>
</dbReference>
<dbReference type="Gene3D" id="3.40.50.11670">
    <property type="entry name" value="DNA replication regulator HobA"/>
    <property type="match status" value="1"/>
</dbReference>
<dbReference type="InterPro" id="IPR021011">
    <property type="entry name" value="HobA"/>
</dbReference>
<dbReference type="InterPro" id="IPR038381">
    <property type="entry name" value="HobA_sf"/>
</dbReference>
<dbReference type="Pfam" id="PF12163">
    <property type="entry name" value="HobA"/>
    <property type="match status" value="1"/>
</dbReference>
<gene>
    <name evidence="4" type="primary">hobA</name>
    <name evidence="6" type="ordered locus">HP_1230</name>
</gene>
<accession>O25828</accession>
<protein>
    <recommendedName>
        <fullName evidence="5">DNA replication regulator protein HobA</fullName>
    </recommendedName>
    <alternativeName>
        <fullName evidence="4">Helicobacter orisome binding protein A</fullName>
        <shortName evidence="4">HobA</shortName>
    </alternativeName>
</protein>
<reference evidence="6" key="1">
    <citation type="journal article" date="1997" name="Nature">
        <title>The complete genome sequence of the gastric pathogen Helicobacter pylori.</title>
        <authorList>
            <person name="Tomb J.-F."/>
            <person name="White O."/>
            <person name="Kerlavage A.R."/>
            <person name="Clayton R.A."/>
            <person name="Sutton G.G."/>
            <person name="Fleischmann R.D."/>
            <person name="Ketchum K.A."/>
            <person name="Klenk H.-P."/>
            <person name="Gill S.R."/>
            <person name="Dougherty B.A."/>
            <person name="Nelson K.E."/>
            <person name="Quackenbush J."/>
            <person name="Zhou L."/>
            <person name="Kirkness E.F."/>
            <person name="Peterson S.N."/>
            <person name="Loftus B.J."/>
            <person name="Richardson D.L."/>
            <person name="Dodson R.J."/>
            <person name="Khalak H.G."/>
            <person name="Glodek A."/>
            <person name="McKenney K."/>
            <person name="FitzGerald L.M."/>
            <person name="Lee N."/>
            <person name="Adams M.D."/>
            <person name="Hickey E.K."/>
            <person name="Berg D.E."/>
            <person name="Gocayne J.D."/>
            <person name="Utterback T.R."/>
            <person name="Peterson J.D."/>
            <person name="Kelley J.M."/>
            <person name="Cotton M.D."/>
            <person name="Weidman J.F."/>
            <person name="Fujii C."/>
            <person name="Bowman C."/>
            <person name="Watthey L."/>
            <person name="Wallin E."/>
            <person name="Hayes W.S."/>
            <person name="Borodovsky M."/>
            <person name="Karp P.D."/>
            <person name="Smith H.O."/>
            <person name="Fraser C.M."/>
            <person name="Venter J.C."/>
        </authorList>
    </citation>
    <scope>NUCLEOTIDE SEQUENCE [LARGE SCALE GENOMIC DNA]</scope>
    <source>
        <strain>ATCC 700392 / 26695</strain>
    </source>
</reference>
<reference key="2">
    <citation type="journal article" date="2007" name="Mol. Microbiol.">
        <title>HobA--a novel protein involved in initiation of chromosomal replication in Helicobacter pylori.</title>
        <authorList>
            <person name="Zawilak-Pawlik A."/>
            <person name="Kois A."/>
            <person name="Stingl K."/>
            <person name="Boneca I.G."/>
            <person name="Skrobuk P."/>
            <person name="Piotr J."/>
            <person name="Lurz R."/>
            <person name="Zakrzewska-Czerwinska J."/>
            <person name="Labigne A."/>
        </authorList>
    </citation>
    <scope>FUNCTION</scope>
    <scope>PROTEIN ABUNDANCE</scope>
    <scope>INTERACTION WITH DNAA</scope>
    <scope>INDUCTION</scope>
    <scope>DISRUPTION PHENOTYPE</scope>
    <source>
        <strain>ATCC 700392 / 26695</strain>
        <strain>N6</strain>
    </source>
</reference>
<reference evidence="7" key="3">
    <citation type="journal article" date="2007" name="Mol. Microbiol.">
        <title>Structural similarity between the DnaA-binding proteins HobA (HP1230) from Helicobacter pylori and DiaA from Escherichia coli.</title>
        <authorList>
            <person name="Natrajan G."/>
            <person name="Hall D.R."/>
            <person name="Thompson A.C."/>
            <person name="Gutsche I."/>
            <person name="Terradot L."/>
        </authorList>
    </citation>
    <scope>X-RAY CRYSTALLOGRAPHY (1.70 ANGSTROMS) IN COMPLEX WITH CALCIUM</scope>
    <scope>SUBUNIT</scope>
    <scope>INTERACTION WITH DNAA</scope>
</reference>
<reference evidence="8" key="4">
    <citation type="journal article" date="2009" name="Proc. Natl. Acad. Sci. U.S.A.">
        <title>The structure of a DnaA/HobA complex from Helicobacter pylori provides insight into regulation of DNA replication in bacteria.</title>
        <authorList>
            <person name="Natrajan G."/>
            <person name="Noirot-Gros M.F."/>
            <person name="Zawilak-Pawlik A."/>
            <person name="Kapp U."/>
            <person name="Terradot L."/>
        </authorList>
    </citation>
    <scope>X-RAY CRYSTALLOGRAPHY (2.67 ANGSTROMS) IN COMPLEX WITH DNAA DOMAINS I AND II</scope>
    <scope>MUTAGENESIS OF 76-GLU--PRO-78; LEU-80 AND TYR-175</scope>
    <source>
        <strain>ATCC 700392 / 26695</strain>
    </source>
</reference>
<proteinExistence type="evidence at protein level"/>
<organism>
    <name type="scientific">Helicobacter pylori (strain ATCC 700392 / 26695)</name>
    <name type="common">Campylobacter pylori</name>
    <dbReference type="NCBI Taxonomy" id="85962"/>
    <lineage>
        <taxon>Bacteria</taxon>
        <taxon>Pseudomonadati</taxon>
        <taxon>Campylobacterota</taxon>
        <taxon>Epsilonproteobacteria</taxon>
        <taxon>Campylobacterales</taxon>
        <taxon>Helicobacteraceae</taxon>
        <taxon>Helicobacter</taxon>
    </lineage>
</organism>
<keyword id="KW-0002">3D-structure</keyword>
<keyword id="KW-0106">Calcium</keyword>
<keyword id="KW-0479">Metal-binding</keyword>
<keyword id="KW-1185">Reference proteome</keyword>